<sequence length="329" mass="36048">MDPEQNAWTRRHMLGMDGLARHEIGAILDSAQAFRDVNYREIKKVPTLRGKTVINLFYENSTRTRTSFELAGKRMSADVINISASSSSAAKGETLLDTVATLQAMRPDVVVLRHGDSGAPHFLARHLDAGIINAGDGQHEHPTQSLLDLLTIQDHLEEMGKSSFEGMNVAICGDVLHSRVARSNAFALRTLGANVRFVGPPTLMPSEATKVFGVTVHHNMEEGLRGVDVIIMLRLQLERMTSAYLPSVREYFAYWGLTRGRLELTQPHALVMHPGPINRGVEIASDVADNPNRSVILEQVANGLAVRMAVLYHLCTGAARNSAQLGESL</sequence>
<proteinExistence type="inferred from homology"/>
<comment type="function">
    <text evidence="1">Catalyzes the condensation of carbamoyl phosphate and aspartate to form carbamoyl aspartate and inorganic phosphate, the committed step in the de novo pyrimidine nucleotide biosynthesis pathway.</text>
</comment>
<comment type="catalytic activity">
    <reaction evidence="1">
        <text>carbamoyl phosphate + L-aspartate = N-carbamoyl-L-aspartate + phosphate + H(+)</text>
        <dbReference type="Rhea" id="RHEA:20013"/>
        <dbReference type="ChEBI" id="CHEBI:15378"/>
        <dbReference type="ChEBI" id="CHEBI:29991"/>
        <dbReference type="ChEBI" id="CHEBI:32814"/>
        <dbReference type="ChEBI" id="CHEBI:43474"/>
        <dbReference type="ChEBI" id="CHEBI:58228"/>
        <dbReference type="EC" id="2.1.3.2"/>
    </reaction>
</comment>
<comment type="pathway">
    <text evidence="1">Pyrimidine metabolism; UMP biosynthesis via de novo pathway; (S)-dihydroorotate from bicarbonate: step 2/3.</text>
</comment>
<comment type="subunit">
    <text evidence="1">Heterododecamer (2C3:3R2) of six catalytic PyrB chains organized as two trimers (C3), and six regulatory PyrI chains organized as three dimers (R2).</text>
</comment>
<comment type="similarity">
    <text evidence="1">Belongs to the aspartate/ornithine carbamoyltransferase superfamily. ATCase family.</text>
</comment>
<name>PYRB_MAGMM</name>
<gene>
    <name evidence="1" type="primary">pyrB</name>
    <name type="ordered locus">Mmc1_0103</name>
</gene>
<organism>
    <name type="scientific">Magnetococcus marinus (strain ATCC BAA-1437 / JCM 17883 / MC-1)</name>
    <dbReference type="NCBI Taxonomy" id="156889"/>
    <lineage>
        <taxon>Bacteria</taxon>
        <taxon>Pseudomonadati</taxon>
        <taxon>Pseudomonadota</taxon>
        <taxon>Alphaproteobacteria</taxon>
        <taxon>Magnetococcales</taxon>
        <taxon>Magnetococcaceae</taxon>
        <taxon>Magnetococcus</taxon>
    </lineage>
</organism>
<feature type="chain" id="PRO_0000321116" description="Aspartate carbamoyltransferase catalytic subunit">
    <location>
        <begin position="1"/>
        <end position="329"/>
    </location>
</feature>
<feature type="binding site" evidence="1">
    <location>
        <position position="63"/>
    </location>
    <ligand>
        <name>carbamoyl phosphate</name>
        <dbReference type="ChEBI" id="CHEBI:58228"/>
    </ligand>
</feature>
<feature type="binding site" evidence="1">
    <location>
        <position position="64"/>
    </location>
    <ligand>
        <name>carbamoyl phosphate</name>
        <dbReference type="ChEBI" id="CHEBI:58228"/>
    </ligand>
</feature>
<feature type="binding site" evidence="1">
    <location>
        <position position="91"/>
    </location>
    <ligand>
        <name>L-aspartate</name>
        <dbReference type="ChEBI" id="CHEBI:29991"/>
    </ligand>
</feature>
<feature type="binding site" evidence="1">
    <location>
        <position position="113"/>
    </location>
    <ligand>
        <name>carbamoyl phosphate</name>
        <dbReference type="ChEBI" id="CHEBI:58228"/>
    </ligand>
</feature>
<feature type="binding site" evidence="1">
    <location>
        <position position="141"/>
    </location>
    <ligand>
        <name>carbamoyl phosphate</name>
        <dbReference type="ChEBI" id="CHEBI:58228"/>
    </ligand>
</feature>
<feature type="binding site" evidence="1">
    <location>
        <position position="144"/>
    </location>
    <ligand>
        <name>carbamoyl phosphate</name>
        <dbReference type="ChEBI" id="CHEBI:58228"/>
    </ligand>
</feature>
<feature type="binding site" evidence="1">
    <location>
        <position position="179"/>
    </location>
    <ligand>
        <name>L-aspartate</name>
        <dbReference type="ChEBI" id="CHEBI:29991"/>
    </ligand>
</feature>
<feature type="binding site" evidence="1">
    <location>
        <position position="234"/>
    </location>
    <ligand>
        <name>L-aspartate</name>
        <dbReference type="ChEBI" id="CHEBI:29991"/>
    </ligand>
</feature>
<feature type="binding site" evidence="1">
    <location>
        <position position="275"/>
    </location>
    <ligand>
        <name>carbamoyl phosphate</name>
        <dbReference type="ChEBI" id="CHEBI:58228"/>
    </ligand>
</feature>
<feature type="binding site" evidence="1">
    <location>
        <position position="276"/>
    </location>
    <ligand>
        <name>carbamoyl phosphate</name>
        <dbReference type="ChEBI" id="CHEBI:58228"/>
    </ligand>
</feature>
<protein>
    <recommendedName>
        <fullName evidence="1">Aspartate carbamoyltransferase catalytic subunit</fullName>
        <ecNumber evidence="1">2.1.3.2</ecNumber>
    </recommendedName>
    <alternativeName>
        <fullName evidence="1">Aspartate transcarbamylase</fullName>
        <shortName evidence="1">ATCase</shortName>
    </alternativeName>
</protein>
<dbReference type="EC" id="2.1.3.2" evidence="1"/>
<dbReference type="EMBL" id="CP000471">
    <property type="protein sequence ID" value="ABK42632.1"/>
    <property type="molecule type" value="Genomic_DNA"/>
</dbReference>
<dbReference type="RefSeq" id="WP_011711805.1">
    <property type="nucleotide sequence ID" value="NC_008576.1"/>
</dbReference>
<dbReference type="SMR" id="A0L3T9"/>
<dbReference type="STRING" id="156889.Mmc1_0103"/>
<dbReference type="KEGG" id="mgm:Mmc1_0103"/>
<dbReference type="eggNOG" id="COG0540">
    <property type="taxonomic scope" value="Bacteria"/>
</dbReference>
<dbReference type="HOGENOM" id="CLU_043846_2_0_5"/>
<dbReference type="OrthoDB" id="9774690at2"/>
<dbReference type="UniPathway" id="UPA00070">
    <property type="reaction ID" value="UER00116"/>
</dbReference>
<dbReference type="Proteomes" id="UP000002586">
    <property type="component" value="Chromosome"/>
</dbReference>
<dbReference type="GO" id="GO:0005829">
    <property type="term" value="C:cytosol"/>
    <property type="evidence" value="ECO:0007669"/>
    <property type="project" value="TreeGrafter"/>
</dbReference>
<dbReference type="GO" id="GO:0016597">
    <property type="term" value="F:amino acid binding"/>
    <property type="evidence" value="ECO:0007669"/>
    <property type="project" value="InterPro"/>
</dbReference>
<dbReference type="GO" id="GO:0004070">
    <property type="term" value="F:aspartate carbamoyltransferase activity"/>
    <property type="evidence" value="ECO:0007669"/>
    <property type="project" value="UniProtKB-UniRule"/>
</dbReference>
<dbReference type="GO" id="GO:0006207">
    <property type="term" value="P:'de novo' pyrimidine nucleobase biosynthetic process"/>
    <property type="evidence" value="ECO:0007669"/>
    <property type="project" value="InterPro"/>
</dbReference>
<dbReference type="GO" id="GO:0044205">
    <property type="term" value="P:'de novo' UMP biosynthetic process"/>
    <property type="evidence" value="ECO:0007669"/>
    <property type="project" value="UniProtKB-UniRule"/>
</dbReference>
<dbReference type="GO" id="GO:0006520">
    <property type="term" value="P:amino acid metabolic process"/>
    <property type="evidence" value="ECO:0007669"/>
    <property type="project" value="InterPro"/>
</dbReference>
<dbReference type="FunFam" id="3.40.50.1370:FF:000007">
    <property type="entry name" value="Aspartate carbamoyltransferase"/>
    <property type="match status" value="1"/>
</dbReference>
<dbReference type="Gene3D" id="3.40.50.1370">
    <property type="entry name" value="Aspartate/ornithine carbamoyltransferase"/>
    <property type="match status" value="2"/>
</dbReference>
<dbReference type="HAMAP" id="MF_00001">
    <property type="entry name" value="Asp_carb_tr"/>
    <property type="match status" value="1"/>
</dbReference>
<dbReference type="InterPro" id="IPR006132">
    <property type="entry name" value="Asp/Orn_carbamoyltranf_P-bd"/>
</dbReference>
<dbReference type="InterPro" id="IPR006130">
    <property type="entry name" value="Asp/Orn_carbamoylTrfase"/>
</dbReference>
<dbReference type="InterPro" id="IPR036901">
    <property type="entry name" value="Asp/Orn_carbamoylTrfase_sf"/>
</dbReference>
<dbReference type="InterPro" id="IPR002082">
    <property type="entry name" value="Asp_carbamoyltransf"/>
</dbReference>
<dbReference type="InterPro" id="IPR006131">
    <property type="entry name" value="Asp_carbamoyltransf_Asp/Orn-bd"/>
</dbReference>
<dbReference type="NCBIfam" id="TIGR00670">
    <property type="entry name" value="asp_carb_tr"/>
    <property type="match status" value="1"/>
</dbReference>
<dbReference type="NCBIfam" id="NF002032">
    <property type="entry name" value="PRK00856.1"/>
    <property type="match status" value="1"/>
</dbReference>
<dbReference type="PANTHER" id="PTHR45753:SF6">
    <property type="entry name" value="ASPARTATE CARBAMOYLTRANSFERASE"/>
    <property type="match status" value="1"/>
</dbReference>
<dbReference type="PANTHER" id="PTHR45753">
    <property type="entry name" value="ORNITHINE CARBAMOYLTRANSFERASE, MITOCHONDRIAL"/>
    <property type="match status" value="1"/>
</dbReference>
<dbReference type="Pfam" id="PF00185">
    <property type="entry name" value="OTCace"/>
    <property type="match status" value="1"/>
</dbReference>
<dbReference type="Pfam" id="PF02729">
    <property type="entry name" value="OTCace_N"/>
    <property type="match status" value="1"/>
</dbReference>
<dbReference type="PRINTS" id="PR00100">
    <property type="entry name" value="AOTCASE"/>
</dbReference>
<dbReference type="PRINTS" id="PR00101">
    <property type="entry name" value="ATCASE"/>
</dbReference>
<dbReference type="SUPFAM" id="SSF53671">
    <property type="entry name" value="Aspartate/ornithine carbamoyltransferase"/>
    <property type="match status" value="1"/>
</dbReference>
<dbReference type="PROSITE" id="PS00097">
    <property type="entry name" value="CARBAMOYLTRANSFERASE"/>
    <property type="match status" value="1"/>
</dbReference>
<keyword id="KW-0665">Pyrimidine biosynthesis</keyword>
<keyword id="KW-1185">Reference proteome</keyword>
<keyword id="KW-0808">Transferase</keyword>
<accession>A0L3T9</accession>
<reference key="1">
    <citation type="journal article" date="2009" name="Appl. Environ. Microbiol.">
        <title>Complete genome sequence of the chemolithoautotrophic marine magnetotactic coccus strain MC-1.</title>
        <authorList>
            <person name="Schubbe S."/>
            <person name="Williams T.J."/>
            <person name="Xie G."/>
            <person name="Kiss H.E."/>
            <person name="Brettin T.S."/>
            <person name="Martinez D."/>
            <person name="Ross C.A."/>
            <person name="Schuler D."/>
            <person name="Cox B.L."/>
            <person name="Nealson K.H."/>
            <person name="Bazylinski D.A."/>
        </authorList>
    </citation>
    <scope>NUCLEOTIDE SEQUENCE [LARGE SCALE GENOMIC DNA]</scope>
    <source>
        <strain>ATCC BAA-1437 / JCM 17883 / MC-1</strain>
    </source>
</reference>
<evidence type="ECO:0000255" key="1">
    <source>
        <dbReference type="HAMAP-Rule" id="MF_00001"/>
    </source>
</evidence>